<reference key="1">
    <citation type="submission" date="2005-08" db="EMBL/GenBank/DDBJ databases">
        <title>Complete sequence of chromosome 1 of Nitrosospira multiformis ATCC 25196.</title>
        <authorList>
            <person name="Copeland A."/>
            <person name="Lucas S."/>
            <person name="Lapidus A."/>
            <person name="Barry K."/>
            <person name="Detter J.C."/>
            <person name="Glavina T."/>
            <person name="Hammon N."/>
            <person name="Israni S."/>
            <person name="Pitluck S."/>
            <person name="Chain P."/>
            <person name="Malfatti S."/>
            <person name="Shin M."/>
            <person name="Vergez L."/>
            <person name="Schmutz J."/>
            <person name="Larimer F."/>
            <person name="Land M."/>
            <person name="Hauser L."/>
            <person name="Kyrpides N."/>
            <person name="Lykidis A."/>
            <person name="Richardson P."/>
        </authorList>
    </citation>
    <scope>NUCLEOTIDE SEQUENCE [LARGE SCALE GENOMIC DNA]</scope>
    <source>
        <strain>ATCC 25196 / NCIMB 11849 / C 71</strain>
    </source>
</reference>
<keyword id="KW-0414">Isoprene biosynthesis</keyword>
<keyword id="KW-0464">Manganese</keyword>
<keyword id="KW-0479">Metal-binding</keyword>
<keyword id="KW-0521">NADP</keyword>
<keyword id="KW-0560">Oxidoreductase</keyword>
<keyword id="KW-1185">Reference proteome</keyword>
<dbReference type="EC" id="1.1.1.267" evidence="1"/>
<dbReference type="EMBL" id="CP000103">
    <property type="protein sequence ID" value="ABB73970.1"/>
    <property type="molecule type" value="Genomic_DNA"/>
</dbReference>
<dbReference type="RefSeq" id="WP_011380020.1">
    <property type="nucleotide sequence ID" value="NC_007614.1"/>
</dbReference>
<dbReference type="SMR" id="Q2YBA1"/>
<dbReference type="STRING" id="323848.Nmul_A0663"/>
<dbReference type="KEGG" id="nmu:Nmul_A0663"/>
<dbReference type="eggNOG" id="COG0743">
    <property type="taxonomic scope" value="Bacteria"/>
</dbReference>
<dbReference type="HOGENOM" id="CLU_035714_4_0_4"/>
<dbReference type="OrthoDB" id="9806546at2"/>
<dbReference type="UniPathway" id="UPA00056">
    <property type="reaction ID" value="UER00092"/>
</dbReference>
<dbReference type="Proteomes" id="UP000002718">
    <property type="component" value="Chromosome"/>
</dbReference>
<dbReference type="GO" id="GO:0030604">
    <property type="term" value="F:1-deoxy-D-xylulose-5-phosphate reductoisomerase activity"/>
    <property type="evidence" value="ECO:0007669"/>
    <property type="project" value="UniProtKB-UniRule"/>
</dbReference>
<dbReference type="GO" id="GO:0030145">
    <property type="term" value="F:manganese ion binding"/>
    <property type="evidence" value="ECO:0007669"/>
    <property type="project" value="TreeGrafter"/>
</dbReference>
<dbReference type="GO" id="GO:0070402">
    <property type="term" value="F:NADPH binding"/>
    <property type="evidence" value="ECO:0007669"/>
    <property type="project" value="InterPro"/>
</dbReference>
<dbReference type="GO" id="GO:0051484">
    <property type="term" value="P:isopentenyl diphosphate biosynthetic process, methylerythritol 4-phosphate pathway involved in terpenoid biosynthetic process"/>
    <property type="evidence" value="ECO:0007669"/>
    <property type="project" value="TreeGrafter"/>
</dbReference>
<dbReference type="FunFam" id="3.40.50.720:FF:000045">
    <property type="entry name" value="1-deoxy-D-xylulose 5-phosphate reductoisomerase"/>
    <property type="match status" value="1"/>
</dbReference>
<dbReference type="Gene3D" id="1.10.1740.10">
    <property type="match status" value="1"/>
</dbReference>
<dbReference type="Gene3D" id="3.40.50.720">
    <property type="entry name" value="NAD(P)-binding Rossmann-like Domain"/>
    <property type="match status" value="1"/>
</dbReference>
<dbReference type="HAMAP" id="MF_00183">
    <property type="entry name" value="DXP_reductoisom"/>
    <property type="match status" value="1"/>
</dbReference>
<dbReference type="InterPro" id="IPR003821">
    <property type="entry name" value="DXP_reductoisomerase"/>
</dbReference>
<dbReference type="InterPro" id="IPR013644">
    <property type="entry name" value="DXP_reductoisomerase_C"/>
</dbReference>
<dbReference type="InterPro" id="IPR013512">
    <property type="entry name" value="DXP_reductoisomerase_N"/>
</dbReference>
<dbReference type="InterPro" id="IPR026877">
    <property type="entry name" value="DXPR_C"/>
</dbReference>
<dbReference type="InterPro" id="IPR036169">
    <property type="entry name" value="DXPR_C_sf"/>
</dbReference>
<dbReference type="InterPro" id="IPR036291">
    <property type="entry name" value="NAD(P)-bd_dom_sf"/>
</dbReference>
<dbReference type="NCBIfam" id="TIGR00243">
    <property type="entry name" value="Dxr"/>
    <property type="match status" value="1"/>
</dbReference>
<dbReference type="NCBIfam" id="NF003938">
    <property type="entry name" value="PRK05447.1-1"/>
    <property type="match status" value="1"/>
</dbReference>
<dbReference type="NCBIfam" id="NF009114">
    <property type="entry name" value="PRK12464.1"/>
    <property type="match status" value="1"/>
</dbReference>
<dbReference type="PANTHER" id="PTHR30525">
    <property type="entry name" value="1-DEOXY-D-XYLULOSE 5-PHOSPHATE REDUCTOISOMERASE"/>
    <property type="match status" value="1"/>
</dbReference>
<dbReference type="PANTHER" id="PTHR30525:SF0">
    <property type="entry name" value="1-DEOXY-D-XYLULOSE 5-PHOSPHATE REDUCTOISOMERASE, CHLOROPLASTIC"/>
    <property type="match status" value="1"/>
</dbReference>
<dbReference type="Pfam" id="PF08436">
    <property type="entry name" value="DXP_redisom_C"/>
    <property type="match status" value="1"/>
</dbReference>
<dbReference type="Pfam" id="PF02670">
    <property type="entry name" value="DXP_reductoisom"/>
    <property type="match status" value="1"/>
</dbReference>
<dbReference type="Pfam" id="PF13288">
    <property type="entry name" value="DXPR_C"/>
    <property type="match status" value="1"/>
</dbReference>
<dbReference type="PIRSF" id="PIRSF006205">
    <property type="entry name" value="Dxp_reductismrs"/>
    <property type="match status" value="1"/>
</dbReference>
<dbReference type="SUPFAM" id="SSF69055">
    <property type="entry name" value="1-deoxy-D-xylulose-5-phosphate reductoisomerase, C-terminal domain"/>
    <property type="match status" value="1"/>
</dbReference>
<dbReference type="SUPFAM" id="SSF55347">
    <property type="entry name" value="Glyceraldehyde-3-phosphate dehydrogenase-like, C-terminal domain"/>
    <property type="match status" value="1"/>
</dbReference>
<dbReference type="SUPFAM" id="SSF51735">
    <property type="entry name" value="NAD(P)-binding Rossmann-fold domains"/>
    <property type="match status" value="1"/>
</dbReference>
<proteinExistence type="inferred from homology"/>
<accession>Q2YBA1</accession>
<sequence>MIAVRHLTILGSTGSIGVSTLDVVARHPDRFRVVALTANKSVQKILEQCRRFEPRYAVLLDEASAELLQVEIRRAGLATEVLWGVDSLEKVASLPDVDTVMAAIVGAAGIRPTFAAAATGKRVLLANKETMVMAGRIFTDVVKENHATLLPIDSEHNAIFQSLPQHFSGDLRAVGVRRILLTASGGPFRQMPLAALENVTPGQACAHPNWVMGQKISVDSATMMNKGLEVIEAHWLFEASPEQIEVVVHPQSIIHSMVEYVDGSVLAQLGNPDMRTPIAHALGFPERIETGVNPLDMFKVARLDFEAPDFERFPCLRLAYQALASGGSAPAVLNAANEVAVDSFLKCLMPFTSIPAMIEDVMQTIGRRDIATLDDVLAADGMAREAAQEWLTCLA</sequence>
<comment type="function">
    <text evidence="1">Catalyzes the NADPH-dependent rearrangement and reduction of 1-deoxy-D-xylulose-5-phosphate (DXP) to 2-C-methyl-D-erythritol 4-phosphate (MEP).</text>
</comment>
<comment type="catalytic activity">
    <reaction evidence="1">
        <text>2-C-methyl-D-erythritol 4-phosphate + NADP(+) = 1-deoxy-D-xylulose 5-phosphate + NADPH + H(+)</text>
        <dbReference type="Rhea" id="RHEA:13717"/>
        <dbReference type="ChEBI" id="CHEBI:15378"/>
        <dbReference type="ChEBI" id="CHEBI:57783"/>
        <dbReference type="ChEBI" id="CHEBI:57792"/>
        <dbReference type="ChEBI" id="CHEBI:58262"/>
        <dbReference type="ChEBI" id="CHEBI:58349"/>
        <dbReference type="EC" id="1.1.1.267"/>
    </reaction>
    <physiologicalReaction direction="right-to-left" evidence="1">
        <dbReference type="Rhea" id="RHEA:13719"/>
    </physiologicalReaction>
</comment>
<comment type="cofactor">
    <cofactor evidence="1">
        <name>Mg(2+)</name>
        <dbReference type="ChEBI" id="CHEBI:18420"/>
    </cofactor>
    <cofactor evidence="1">
        <name>Mn(2+)</name>
        <dbReference type="ChEBI" id="CHEBI:29035"/>
    </cofactor>
</comment>
<comment type="pathway">
    <text evidence="1">Isoprenoid biosynthesis; isopentenyl diphosphate biosynthesis via DXP pathway; isopentenyl diphosphate from 1-deoxy-D-xylulose 5-phosphate: step 1/6.</text>
</comment>
<comment type="similarity">
    <text evidence="1">Belongs to the DXR family.</text>
</comment>
<evidence type="ECO:0000255" key="1">
    <source>
        <dbReference type="HAMAP-Rule" id="MF_00183"/>
    </source>
</evidence>
<name>DXR_NITMU</name>
<protein>
    <recommendedName>
        <fullName evidence="1">1-deoxy-D-xylulose 5-phosphate reductoisomerase</fullName>
        <shortName evidence="1">DXP reductoisomerase</shortName>
        <ecNumber evidence="1">1.1.1.267</ecNumber>
    </recommendedName>
    <alternativeName>
        <fullName evidence="1">1-deoxyxylulose-5-phosphate reductoisomerase</fullName>
    </alternativeName>
    <alternativeName>
        <fullName evidence="1">2-C-methyl-D-erythritol 4-phosphate synthase</fullName>
    </alternativeName>
</protein>
<gene>
    <name evidence="1" type="primary">dxr</name>
    <name type="ordered locus">Nmul_A0663</name>
</gene>
<feature type="chain" id="PRO_1000020282" description="1-deoxy-D-xylulose 5-phosphate reductoisomerase">
    <location>
        <begin position="1"/>
        <end position="395"/>
    </location>
</feature>
<feature type="binding site" evidence="1">
    <location>
        <position position="13"/>
    </location>
    <ligand>
        <name>NADPH</name>
        <dbReference type="ChEBI" id="CHEBI:57783"/>
    </ligand>
</feature>
<feature type="binding site" evidence="1">
    <location>
        <position position="14"/>
    </location>
    <ligand>
        <name>NADPH</name>
        <dbReference type="ChEBI" id="CHEBI:57783"/>
    </ligand>
</feature>
<feature type="binding site" evidence="1">
    <location>
        <position position="15"/>
    </location>
    <ligand>
        <name>NADPH</name>
        <dbReference type="ChEBI" id="CHEBI:57783"/>
    </ligand>
</feature>
<feature type="binding site" evidence="1">
    <location>
        <position position="16"/>
    </location>
    <ligand>
        <name>NADPH</name>
        <dbReference type="ChEBI" id="CHEBI:57783"/>
    </ligand>
</feature>
<feature type="binding site" evidence="1">
    <location>
        <position position="40"/>
    </location>
    <ligand>
        <name>NADPH</name>
        <dbReference type="ChEBI" id="CHEBI:57783"/>
    </ligand>
</feature>
<feature type="binding site" evidence="1">
    <location>
        <position position="127"/>
    </location>
    <ligand>
        <name>NADPH</name>
        <dbReference type="ChEBI" id="CHEBI:57783"/>
    </ligand>
</feature>
<feature type="binding site" evidence="1">
    <location>
        <position position="128"/>
    </location>
    <ligand>
        <name>1-deoxy-D-xylulose 5-phosphate</name>
        <dbReference type="ChEBI" id="CHEBI:57792"/>
    </ligand>
</feature>
<feature type="binding site" evidence="1">
    <location>
        <position position="129"/>
    </location>
    <ligand>
        <name>NADPH</name>
        <dbReference type="ChEBI" id="CHEBI:57783"/>
    </ligand>
</feature>
<feature type="binding site" evidence="1">
    <location>
        <position position="153"/>
    </location>
    <ligand>
        <name>Mn(2+)</name>
        <dbReference type="ChEBI" id="CHEBI:29035"/>
    </ligand>
</feature>
<feature type="binding site" evidence="1">
    <location>
        <position position="154"/>
    </location>
    <ligand>
        <name>1-deoxy-D-xylulose 5-phosphate</name>
        <dbReference type="ChEBI" id="CHEBI:57792"/>
    </ligand>
</feature>
<feature type="binding site" evidence="1">
    <location>
        <position position="155"/>
    </location>
    <ligand>
        <name>1-deoxy-D-xylulose 5-phosphate</name>
        <dbReference type="ChEBI" id="CHEBI:57792"/>
    </ligand>
</feature>
<feature type="binding site" evidence="1">
    <location>
        <position position="155"/>
    </location>
    <ligand>
        <name>Mn(2+)</name>
        <dbReference type="ChEBI" id="CHEBI:29035"/>
    </ligand>
</feature>
<feature type="binding site" evidence="1">
    <location>
        <position position="184"/>
    </location>
    <ligand>
        <name>1-deoxy-D-xylulose 5-phosphate</name>
        <dbReference type="ChEBI" id="CHEBI:57792"/>
    </ligand>
</feature>
<feature type="binding site" evidence="1">
    <location>
        <position position="207"/>
    </location>
    <ligand>
        <name>1-deoxy-D-xylulose 5-phosphate</name>
        <dbReference type="ChEBI" id="CHEBI:57792"/>
    </ligand>
</feature>
<feature type="binding site" evidence="1">
    <location>
        <position position="213"/>
    </location>
    <ligand>
        <name>NADPH</name>
        <dbReference type="ChEBI" id="CHEBI:57783"/>
    </ligand>
</feature>
<feature type="binding site" evidence="1">
    <location>
        <position position="220"/>
    </location>
    <ligand>
        <name>1-deoxy-D-xylulose 5-phosphate</name>
        <dbReference type="ChEBI" id="CHEBI:57792"/>
    </ligand>
</feature>
<feature type="binding site" evidence="1">
    <location>
        <position position="225"/>
    </location>
    <ligand>
        <name>1-deoxy-D-xylulose 5-phosphate</name>
        <dbReference type="ChEBI" id="CHEBI:57792"/>
    </ligand>
</feature>
<feature type="binding site" evidence="1">
    <location>
        <position position="226"/>
    </location>
    <ligand>
        <name>1-deoxy-D-xylulose 5-phosphate</name>
        <dbReference type="ChEBI" id="CHEBI:57792"/>
    </ligand>
</feature>
<feature type="binding site" evidence="1">
    <location>
        <position position="229"/>
    </location>
    <ligand>
        <name>1-deoxy-D-xylulose 5-phosphate</name>
        <dbReference type="ChEBI" id="CHEBI:57792"/>
    </ligand>
</feature>
<feature type="binding site" evidence="1">
    <location>
        <position position="229"/>
    </location>
    <ligand>
        <name>Mn(2+)</name>
        <dbReference type="ChEBI" id="CHEBI:29035"/>
    </ligand>
</feature>
<organism>
    <name type="scientific">Nitrosospira multiformis (strain ATCC 25196 / NCIMB 11849 / C 71)</name>
    <dbReference type="NCBI Taxonomy" id="323848"/>
    <lineage>
        <taxon>Bacteria</taxon>
        <taxon>Pseudomonadati</taxon>
        <taxon>Pseudomonadota</taxon>
        <taxon>Betaproteobacteria</taxon>
        <taxon>Nitrosomonadales</taxon>
        <taxon>Nitrosomonadaceae</taxon>
        <taxon>Nitrosospira</taxon>
    </lineage>
</organism>